<organismHost>
    <name type="scientific">Homo sapiens</name>
    <name type="common">Human</name>
    <dbReference type="NCBI Taxonomy" id="9606"/>
</organismHost>
<sequence length="2194" mass="245144">MGAQVSTQKTGAHETGLSASGNSVIHYTNINYYKDSASNSLNRQDFTQDPSRFTEPVQDVLIKTLPALNSPTVEECGYSDRVRSITLGNSTITTQECANVVVGYGVWPTYLSDHEATAVDQPTQPDVATCRFYTLESVKWESSSAGWWWKFPEALSDMGLFGQNMQYHYLGRAGYTIHVQCNASKFHQGCLLVVCVPEAEMGAATTDHAMNHTKLSNIGQAMEFSAGKSTDQTGPQTAVHNAGMGVAVGNLTIYPHQWINLRTNNSATIVMPYINSVPMDNMYRHYNFTLMVIPFAKLEHSPQASTYVPITVTVAPMCAEYNGLRLAGHQGLPTMNTPGSTQFLTSDDFQSPSAMPQFDVTPEIQIPGQVRNLMEIAEVDSVVPVDNTEEHVNSIEAYRIPVRPQTNSGEQVFGFQLQPGYDSVLKHTLLGEILNYYANWSGSMKLTFMYCGAAMATGKFLIAYSPPGAGVPGSRKDAMLGTHVIWDVGLQSSCVLCVPWISQTNYRYVTRDAYTDAGYITCWYQTSIVTPPDIPTTSTILCFVSACNDFSVRLLRDTPFITQQALYQNDPEGALNKAVGRVADTIASGPVNTEQIPALTAVETGHTSQVVPSDTMQTRHVVNFHTRSESSLENFMGRAACAYIAHYTTEKANDDLDRYTNWEITTRQVAQLRRKLEMFTYMRFDLEITFVITSSQRTSNRYASDSPPLTHQIMYVPPGGPIPKGYEDFAWQTSTNPSVFWTEGNAPPRMSIPFMSVGNAYCNFYDGWSHFSQSGVYGYTTLNNMGHLYFRHVNKSTAYPVNSVARVYFKPKHVKAWVPRAPRLCPYLYAKNVNFDVQGVTESRGKITLDRSTHNPVLTTGAFEQQSGAAYVGNYRLVNRHLATHTDWQNCVWKDYNRDLLVSTTTAHGCDTIARCQCTTGVYFCASRNKHYPVTFEGPGLVEVQESEYYPKRYQSHVLLAAGFSEPGDCGGILRCEHGVIGLVTMGGEGVVGFADVRDLLWLEDDAMEQGVKDYVEQLGNAFGSGFTNQICEQVNLLKESLIGQDSILEKSLKALVKIISALVIVVRNHDDLITVTATLALIGCTTSPWRWLKHKVSQYYGIPMAERQNNNWLKKFTEMTNACKGMEWIAIKIQKFIEWLKVKILPEVKEKHEFLNRLKQLPLLESQIATIEQSAPSQSDQEQLFSNVQYFAHYCRKYAPLYAAEAKRVFSLEKKMSNYIQFKSKCRIEPVCLLLHGSPGAGKSVATNLIGRSLAEKLNSSVYSLPPDPDHFDGYKQQAVVIMDDLCQNPDGKDVSLFCQMVSSVDFVPPMAALEEKGILFTSPFVLASTNAGSINAPTVSDSRALARRFHFDMNIEVISMYSQNGKINMPMSVKTCDEECCPVNFKRCCPLVCGKAIQFIDRRTQVRYSLDMLVTEMFREYNHRHSVGATLEALFQGPPVYREIKISVAPETPPPPAIADLLKSVDSEAVREYCKEKGWLVPEINSTLQIEKHVSRAFICLQALTTFVSVAGIIYIIYKLFAGFQGAYSGMPNQKSKVPTLRQAKVQGPAFEFAVAMMKRNASTVKTEYGEFTMLGIYDRWAVLPRHAKPGPTIIMNDQEVGVVDAKELVDKDGTNLELTLLKLNRNEKFRDIRGFLAREEAEVNEAVLAINTSKFPNMYIPVGQVTDYGFLNLGGTPTKRMLMYNFPTRAGQCGGVLMSTGKVLGVHVGGNGHQGFSAALLRHYFNDEQGEIEFIESSKEAGFPVINTPSKTKLEPSVFHHVFEGNKEPAVLRNGDPRLKANFEEAIFSKYIGNVNTHVDEYMMEAVDHYAGQLATLDISTEPMKLEDAVYGTEGLEALDLTTSAGYPYVALGIKKRDILSKKTKDLAKLKECMDKYGLNLPMVTYVKDELRSAEKVAKGKSRLIEASSLNDSVAMRQTFGNLYKTFHMNPGIVTGSAVGCDPDLFWSKIPVMLDGHLIAFDYSGYDASLSPVWFACLKLLLEKLGYSHKETNYIDYLCNSHHLYRDKHYFVRGGMPSGCSGTSIFNSMINNIIIRTLMLKVYKGIDLDQFRMIAYGDDVIASYPHPIDASLLAEAGKGYGLIMTPADKGECFNEVTWTNVTFLKRYFRADEQYPFLVHPVMPMKDIHESIRWTKDPKNTQDHVRSLCLLAWHNGEQEYEEFVSKIRSVPVGRCLTLPAFSTLRRKWLDSF</sequence>
<evidence type="ECO:0000250" key="1">
    <source>
        <dbReference type="UniProtKB" id="B9VUU3"/>
    </source>
</evidence>
<evidence type="ECO:0000250" key="2">
    <source>
        <dbReference type="UniProtKB" id="P03300"/>
    </source>
</evidence>
<evidence type="ECO:0000250" key="3">
    <source>
        <dbReference type="UniProtKB" id="P03301"/>
    </source>
</evidence>
<evidence type="ECO:0000250" key="4">
    <source>
        <dbReference type="UniProtKB" id="P03303"/>
    </source>
</evidence>
<evidence type="ECO:0000250" key="5">
    <source>
        <dbReference type="UniProtKB" id="P03313"/>
    </source>
</evidence>
<evidence type="ECO:0000250" key="6">
    <source>
        <dbReference type="UniProtKB" id="P04936"/>
    </source>
</evidence>
<evidence type="ECO:0000250" key="7">
    <source>
        <dbReference type="UniProtKB" id="Q66478"/>
    </source>
</evidence>
<evidence type="ECO:0000250" key="8">
    <source>
        <dbReference type="UniProtKB" id="Q9QF31"/>
    </source>
</evidence>
<evidence type="ECO:0000255" key="9"/>
<evidence type="ECO:0000255" key="10">
    <source>
        <dbReference type="PROSITE-ProRule" id="PRU00539"/>
    </source>
</evidence>
<evidence type="ECO:0000255" key="11">
    <source>
        <dbReference type="PROSITE-ProRule" id="PRU00551"/>
    </source>
</evidence>
<evidence type="ECO:0000255" key="12">
    <source>
        <dbReference type="PROSITE-ProRule" id="PRU01222"/>
    </source>
</evidence>
<evidence type="ECO:0000305" key="13"/>
<feature type="initiator methionine" description="Removed; by host" evidence="2">
    <location>
        <position position="1"/>
    </location>
</feature>
<feature type="chain" id="PRO_0000426461" description="Genome polyprotein">
    <location>
        <begin position="2"/>
        <end position="2194"/>
    </location>
</feature>
<feature type="chain" id="PRO_0000426462" description="P1">
    <location>
        <begin position="2"/>
        <end position="860"/>
    </location>
</feature>
<feature type="chain" id="PRO_0000426463" description="Capsid protein VP0">
    <location>
        <begin position="2"/>
        <end position="330"/>
    </location>
</feature>
<feature type="chain" id="PRO_0000426464" description="Capsid protein VP4">
    <location>
        <begin position="2"/>
        <end position="69"/>
    </location>
</feature>
<feature type="chain" id="PRO_0000426465" description="Capsid protein VP2">
    <location>
        <begin position="70"/>
        <end position="330"/>
    </location>
</feature>
<feature type="chain" id="PRO_0000426466" description="Capsid protein VP3">
    <location>
        <begin position="331"/>
        <end position="568"/>
    </location>
</feature>
<feature type="chain" id="PRO_0000426467" description="Capsid protein VP1">
    <location>
        <begin position="569"/>
        <end position="860"/>
    </location>
</feature>
<feature type="chain" id="PRO_0000426469" description="Protease 2A">
    <location>
        <begin position="851"/>
        <end position="1010"/>
    </location>
</feature>
<feature type="chain" id="PRO_0000426468" description="P2">
    <location>
        <begin position="861"/>
        <end position="1438"/>
    </location>
</feature>
<feature type="chain" id="PRO_0000039765" description="Protein 2B">
    <location>
        <begin position="1011"/>
        <end position="1109"/>
    </location>
</feature>
<feature type="chain" id="PRO_0000039766" description="Protein 2C">
    <location>
        <begin position="1110"/>
        <end position="1438"/>
    </location>
</feature>
<feature type="chain" id="PRO_0000426470" description="P3">
    <location>
        <begin position="1439"/>
        <end position="2194"/>
    </location>
</feature>
<feature type="chain" id="PRO_0000426471" description="Protein 3AB">
    <location>
        <begin position="1439"/>
        <end position="1549"/>
    </location>
</feature>
<feature type="chain" id="PRO_0000039767" description="Protein 3A">
    <location>
        <begin position="1439"/>
        <end position="1527"/>
    </location>
</feature>
<feature type="chain" id="PRO_0000426472" description="Viral protein genome-linked">
    <location>
        <begin position="1528"/>
        <end position="1549"/>
    </location>
</feature>
<feature type="chain" id="PRO_0000426473" description="Protein 3CD">
    <location>
        <begin position="1550"/>
        <end position="2194"/>
    </location>
</feature>
<feature type="chain" id="PRO_0000426474" description="Protease 3C">
    <location>
        <begin position="1550"/>
        <end position="1732"/>
    </location>
</feature>
<feature type="chain" id="PRO_0000426475" description="RNA-directed RNA polymerase">
    <location>
        <begin position="1733"/>
        <end position="2194"/>
    </location>
</feature>
<feature type="topological domain" description="Cytoplasmic" evidence="9">
    <location>
        <begin position="2"/>
        <end position="1504"/>
    </location>
</feature>
<feature type="intramembrane region" evidence="9">
    <location>
        <begin position="1505"/>
        <end position="1520"/>
    </location>
</feature>
<feature type="topological domain" description="Cytoplasmic" evidence="9">
    <location>
        <begin position="1521"/>
        <end position="2194"/>
    </location>
</feature>
<feature type="domain" description="SF3 helicase" evidence="11">
    <location>
        <begin position="1214"/>
        <end position="1370"/>
    </location>
</feature>
<feature type="domain" description="Peptidase C3" evidence="12">
    <location>
        <begin position="1550"/>
        <end position="1728"/>
    </location>
</feature>
<feature type="domain" description="RdRp catalytic" evidence="10">
    <location>
        <begin position="1959"/>
        <end position="2075"/>
    </location>
</feature>
<feature type="zinc finger region" description="C4-type; degenerate" evidence="1">
    <location>
        <begin position="1378"/>
        <end position="1395"/>
    </location>
</feature>
<feature type="region of interest" description="Amphipathic alpha-helix" evidence="9">
    <location>
        <begin position="566"/>
        <end position="582"/>
    </location>
</feature>
<feature type="region of interest" description="Oligomerization" evidence="2">
    <location>
        <begin position="1110"/>
        <end position="1248"/>
    </location>
</feature>
<feature type="region of interest" description="Membrane-binding" evidence="2">
    <location>
        <begin position="1110"/>
        <end position="1182"/>
    </location>
</feature>
<feature type="region of interest" description="RNA-binding" evidence="2">
    <location>
        <begin position="1131"/>
        <end position="1135"/>
    </location>
</feature>
<feature type="region of interest" description="RNA-binding" evidence="2">
    <location>
        <begin position="1422"/>
        <end position="1429"/>
    </location>
</feature>
<feature type="region of interest" description="Oligomerization" evidence="2">
    <location>
        <begin position="1433"/>
        <end position="1438"/>
    </location>
</feature>
<feature type="active site" description="For protease 2A activity" evidence="2">
    <location>
        <position position="881"/>
    </location>
</feature>
<feature type="active site" description="For protease 2A activity" evidence="2">
    <location>
        <position position="899"/>
    </location>
</feature>
<feature type="active site" description="For protease 2A activity" evidence="2">
    <location>
        <position position="970"/>
    </location>
</feature>
<feature type="active site" description="For protease 3C activity" evidence="12">
    <location>
        <position position="1589"/>
    </location>
</feature>
<feature type="active site" description="For protease 3C activity" evidence="12">
    <location>
        <position position="1620"/>
    </location>
</feature>
<feature type="active site" description="For protease 3C activity" evidence="12">
    <location>
        <position position="1696"/>
    </location>
</feature>
<feature type="binding site" evidence="8">
    <location>
        <position position="916"/>
    </location>
    <ligand>
        <name>Zn(2+)</name>
        <dbReference type="ChEBI" id="CHEBI:29105"/>
        <label>1</label>
        <note>structural</note>
    </ligand>
</feature>
<feature type="binding site" evidence="8">
    <location>
        <position position="918"/>
    </location>
    <ligand>
        <name>Zn(2+)</name>
        <dbReference type="ChEBI" id="CHEBI:29105"/>
        <label>1</label>
        <note>structural</note>
    </ligand>
</feature>
<feature type="binding site" evidence="8">
    <location>
        <position position="976"/>
    </location>
    <ligand>
        <name>Zn(2+)</name>
        <dbReference type="ChEBI" id="CHEBI:29105"/>
        <label>1</label>
        <note>structural</note>
    </ligand>
</feature>
<feature type="binding site" evidence="8">
    <location>
        <position position="978"/>
    </location>
    <ligand>
        <name>Zn(2+)</name>
        <dbReference type="ChEBI" id="CHEBI:29105"/>
        <label>1</label>
        <note>structural</note>
    </ligand>
</feature>
<feature type="binding site" evidence="1">
    <location>
        <position position="1378"/>
    </location>
    <ligand>
        <name>Zn(2+)</name>
        <dbReference type="ChEBI" id="CHEBI:29105"/>
        <label>2</label>
    </ligand>
</feature>
<feature type="binding site" evidence="1">
    <location>
        <position position="1390"/>
    </location>
    <ligand>
        <name>Zn(2+)</name>
        <dbReference type="ChEBI" id="CHEBI:29105"/>
        <label>2</label>
    </ligand>
</feature>
<feature type="binding site" evidence="1">
    <location>
        <position position="1395"/>
    </location>
    <ligand>
        <name>Zn(2+)</name>
        <dbReference type="ChEBI" id="CHEBI:29105"/>
        <label>2</label>
    </ligand>
</feature>
<feature type="binding site" evidence="2">
    <location>
        <position position="1965"/>
    </location>
    <ligand>
        <name>Mg(2+)</name>
        <dbReference type="ChEBI" id="CHEBI:18420"/>
        <label>1</label>
        <note>catalytic; for RdRp activity</note>
    </ligand>
</feature>
<feature type="binding site" evidence="2">
    <location>
        <position position="1965"/>
    </location>
    <ligand>
        <name>Mg(2+)</name>
        <dbReference type="ChEBI" id="CHEBI:18420"/>
        <label>2</label>
        <note>catalytic; for RdRp activity</note>
    </ligand>
</feature>
<feature type="binding site" evidence="2">
    <location>
        <position position="2061"/>
    </location>
    <ligand>
        <name>Mg(2+)</name>
        <dbReference type="ChEBI" id="CHEBI:18420"/>
        <label>1</label>
        <note>catalytic; for RdRp activity</note>
    </ligand>
</feature>
<feature type="binding site" evidence="2">
    <location>
        <position position="2061"/>
    </location>
    <ligand>
        <name>Mg(2+)</name>
        <dbReference type="ChEBI" id="CHEBI:18420"/>
        <label>2</label>
        <note>catalytic; for RdRp activity</note>
    </ligand>
</feature>
<feature type="site" description="Cleavage; by autolysis" evidence="2">
    <location>
        <begin position="69"/>
        <end position="70"/>
    </location>
</feature>
<feature type="site" description="Cleavage; by protease 3C" evidence="3">
    <location>
        <begin position="330"/>
        <end position="331"/>
    </location>
</feature>
<feature type="site" description="Cleavage; by autolysis" evidence="3">
    <location>
        <begin position="860"/>
        <end position="861"/>
    </location>
</feature>
<feature type="site" description="Cleavage; by protease 3C" evidence="3">
    <location>
        <begin position="1010"/>
        <end position="1011"/>
    </location>
</feature>
<feature type="site" description="Cleavage; by protease 3C" evidence="3">
    <location>
        <begin position="1109"/>
        <end position="1110"/>
    </location>
</feature>
<feature type="site" description="Involved in the interaction with host RTN3" evidence="7">
    <location>
        <position position="1134"/>
    </location>
</feature>
<feature type="site" description="Cleavage; by protease 3C" evidence="3">
    <location>
        <begin position="1438"/>
        <end position="1439"/>
    </location>
</feature>
<feature type="site" description="Cleavage; by protease 3C" evidence="3">
    <location>
        <begin position="1527"/>
        <end position="1528"/>
    </location>
</feature>
<feature type="site" description="Cleavage; by protease 3C" evidence="3">
    <location>
        <begin position="1549"/>
        <end position="1550"/>
    </location>
</feature>
<feature type="site" description="Cleavage; by protease 3C" evidence="3">
    <location>
        <begin position="1732"/>
        <end position="1733"/>
    </location>
</feature>
<feature type="modified residue" description="O-(5'-phospho-RNA)-tyrosine" evidence="2">
    <location>
        <position position="1530"/>
    </location>
</feature>
<feature type="lipid moiety-binding region" description="N-myristoyl glycine; by host" evidence="2">
    <location>
        <position position="2"/>
    </location>
</feature>
<proteinExistence type="evidence at protein level"/>
<dbReference type="EC" id="3.4.22.29" evidence="2"/>
<dbReference type="EC" id="3.6.1.15" evidence="2"/>
<dbReference type="EC" id="3.4.22.28" evidence="12"/>
<dbReference type="EC" id="2.7.7.48" evidence="10"/>
<dbReference type="EMBL" id="AF162711">
    <property type="protein sequence ID" value="AAD45119.1"/>
    <property type="molecule type" value="Genomic_RNA"/>
</dbReference>
<dbReference type="SMR" id="Q9WN78"/>
<dbReference type="MEROPS" id="C03.011"/>
<dbReference type="MEROPS" id="N08.001"/>
<dbReference type="Proteomes" id="UP000002678">
    <property type="component" value="Genome"/>
</dbReference>
<dbReference type="GO" id="GO:0044162">
    <property type="term" value="C:host cell cytoplasmic vesicle membrane"/>
    <property type="evidence" value="ECO:0007669"/>
    <property type="project" value="UniProtKB-SubCell"/>
</dbReference>
<dbReference type="GO" id="GO:0042025">
    <property type="term" value="C:host cell nucleus"/>
    <property type="evidence" value="ECO:0007669"/>
    <property type="project" value="UniProtKB-SubCell"/>
</dbReference>
<dbReference type="GO" id="GO:0016020">
    <property type="term" value="C:membrane"/>
    <property type="evidence" value="ECO:0007669"/>
    <property type="project" value="UniProtKB-KW"/>
</dbReference>
<dbReference type="GO" id="GO:0039618">
    <property type="term" value="C:T=pseudo3 icosahedral viral capsid"/>
    <property type="evidence" value="ECO:0007669"/>
    <property type="project" value="UniProtKB-KW"/>
</dbReference>
<dbReference type="GO" id="GO:0005524">
    <property type="term" value="F:ATP binding"/>
    <property type="evidence" value="ECO:0007669"/>
    <property type="project" value="UniProtKB-KW"/>
</dbReference>
<dbReference type="GO" id="GO:0016887">
    <property type="term" value="F:ATP hydrolysis activity"/>
    <property type="evidence" value="ECO:0007669"/>
    <property type="project" value="InterPro"/>
</dbReference>
<dbReference type="GO" id="GO:0015267">
    <property type="term" value="F:channel activity"/>
    <property type="evidence" value="ECO:0007669"/>
    <property type="project" value="UniProtKB-KW"/>
</dbReference>
<dbReference type="GO" id="GO:0004197">
    <property type="term" value="F:cysteine-type endopeptidase activity"/>
    <property type="evidence" value="ECO:0007669"/>
    <property type="project" value="UniProtKB-EC"/>
</dbReference>
<dbReference type="GO" id="GO:0003723">
    <property type="term" value="F:RNA binding"/>
    <property type="evidence" value="ECO:0007669"/>
    <property type="project" value="UniProtKB-KW"/>
</dbReference>
<dbReference type="GO" id="GO:0003724">
    <property type="term" value="F:RNA helicase activity"/>
    <property type="evidence" value="ECO:0007669"/>
    <property type="project" value="InterPro"/>
</dbReference>
<dbReference type="GO" id="GO:0003968">
    <property type="term" value="F:RNA-directed RNA polymerase activity"/>
    <property type="evidence" value="ECO:0007669"/>
    <property type="project" value="UniProtKB-KW"/>
</dbReference>
<dbReference type="GO" id="GO:0005198">
    <property type="term" value="F:structural molecule activity"/>
    <property type="evidence" value="ECO:0007669"/>
    <property type="project" value="InterPro"/>
</dbReference>
<dbReference type="GO" id="GO:0008270">
    <property type="term" value="F:zinc ion binding"/>
    <property type="evidence" value="ECO:0007669"/>
    <property type="project" value="UniProtKB-KW"/>
</dbReference>
<dbReference type="GO" id="GO:0006260">
    <property type="term" value="P:DNA replication"/>
    <property type="evidence" value="ECO:0007669"/>
    <property type="project" value="UniProtKB-KW"/>
</dbReference>
<dbReference type="GO" id="GO:0006351">
    <property type="term" value="P:DNA-templated transcription"/>
    <property type="evidence" value="ECO:0007669"/>
    <property type="project" value="InterPro"/>
</dbReference>
<dbReference type="GO" id="GO:0075509">
    <property type="term" value="P:endocytosis involved in viral entry into host cell"/>
    <property type="evidence" value="ECO:0007669"/>
    <property type="project" value="UniProtKB-KW"/>
</dbReference>
<dbReference type="GO" id="GO:0034220">
    <property type="term" value="P:monoatomic ion transmembrane transport"/>
    <property type="evidence" value="ECO:0007669"/>
    <property type="project" value="UniProtKB-KW"/>
</dbReference>
<dbReference type="GO" id="GO:0006508">
    <property type="term" value="P:proteolysis"/>
    <property type="evidence" value="ECO:0007669"/>
    <property type="project" value="UniProtKB-KW"/>
</dbReference>
<dbReference type="GO" id="GO:0044694">
    <property type="term" value="P:symbiont genome entry into host cell via pore formation in plasma membrane"/>
    <property type="evidence" value="ECO:0007669"/>
    <property type="project" value="UniProtKB-KW"/>
</dbReference>
<dbReference type="GO" id="GO:0039520">
    <property type="term" value="P:symbiont-mediated activation of host autophagy"/>
    <property type="evidence" value="ECO:0000250"/>
    <property type="project" value="UniProtKB"/>
</dbReference>
<dbReference type="GO" id="GO:0039540">
    <property type="term" value="P:symbiont-mediated suppression of host cytoplasmic pattern recognition receptor signaling pathway via inhibition of RIG-I activity"/>
    <property type="evidence" value="ECO:0007669"/>
    <property type="project" value="UniProtKB-KW"/>
</dbReference>
<dbReference type="GO" id="GO:0039522">
    <property type="term" value="P:symbiont-mediated suppression of host mRNA export from nucleus"/>
    <property type="evidence" value="ECO:0007669"/>
    <property type="project" value="UniProtKB-KW"/>
</dbReference>
<dbReference type="GO" id="GO:0039694">
    <property type="term" value="P:viral RNA genome replication"/>
    <property type="evidence" value="ECO:0007669"/>
    <property type="project" value="InterPro"/>
</dbReference>
<dbReference type="GO" id="GO:0019062">
    <property type="term" value="P:virion attachment to host cell"/>
    <property type="evidence" value="ECO:0007669"/>
    <property type="project" value="UniProtKB-KW"/>
</dbReference>
<dbReference type="CDD" id="cd23213">
    <property type="entry name" value="Enterovirus_RdRp"/>
    <property type="match status" value="1"/>
</dbReference>
<dbReference type="CDD" id="cd00205">
    <property type="entry name" value="rhv_like"/>
    <property type="match status" value="3"/>
</dbReference>
<dbReference type="FunFam" id="1.20.960.20:FF:000001">
    <property type="entry name" value="Genome polyprotein"/>
    <property type="match status" value="1"/>
</dbReference>
<dbReference type="FunFam" id="2.40.10.10:FF:000018">
    <property type="entry name" value="Genome polyprotein"/>
    <property type="match status" value="1"/>
</dbReference>
<dbReference type="FunFam" id="2.40.10.10:FF:000020">
    <property type="entry name" value="Genome polyprotein"/>
    <property type="match status" value="1"/>
</dbReference>
<dbReference type="FunFam" id="2.40.10.10:FF:000022">
    <property type="entry name" value="Genome polyprotein"/>
    <property type="match status" value="1"/>
</dbReference>
<dbReference type="FunFam" id="2.60.120.20:FF:000001">
    <property type="entry name" value="Genome polyprotein"/>
    <property type="match status" value="1"/>
</dbReference>
<dbReference type="FunFam" id="2.60.120.20:FF:000002">
    <property type="entry name" value="Genome polyprotein"/>
    <property type="match status" value="1"/>
</dbReference>
<dbReference type="FunFam" id="2.60.120.20:FF:000004">
    <property type="entry name" value="Genome polyprotein"/>
    <property type="match status" value="1"/>
</dbReference>
<dbReference type="FunFam" id="3.30.70.270:FF:000008">
    <property type="entry name" value="Genome polyprotein"/>
    <property type="match status" value="1"/>
</dbReference>
<dbReference type="FunFam" id="4.10.80.10:FF:000001">
    <property type="entry name" value="Genome polyprotein"/>
    <property type="match status" value="1"/>
</dbReference>
<dbReference type="FunFam" id="4.10.880.10:FF:000001">
    <property type="entry name" value="Genome polyprotein"/>
    <property type="match status" value="1"/>
</dbReference>
<dbReference type="FunFam" id="4.10.880.10:FF:000002">
    <property type="entry name" value="Genome polyprotein"/>
    <property type="match status" value="1"/>
</dbReference>
<dbReference type="Gene3D" id="1.20.960.20">
    <property type="match status" value="1"/>
</dbReference>
<dbReference type="Gene3D" id="2.60.120.20">
    <property type="match status" value="3"/>
</dbReference>
<dbReference type="Gene3D" id="3.30.70.270">
    <property type="match status" value="1"/>
</dbReference>
<dbReference type="Gene3D" id="4.10.80.10">
    <property type="entry name" value="Picornavirus coat protein VP4"/>
    <property type="match status" value="1"/>
</dbReference>
<dbReference type="Gene3D" id="6.10.20.20">
    <property type="entry name" value="Poliovirus 3A protein-like"/>
    <property type="match status" value="1"/>
</dbReference>
<dbReference type="Gene3D" id="4.10.880.10">
    <property type="entry name" value="Poliovirus 3D polymerase Domain 1 (Nucleotidyltransferase)"/>
    <property type="match status" value="2"/>
</dbReference>
<dbReference type="Gene3D" id="2.40.10.10">
    <property type="entry name" value="Trypsin-like serine proteases"/>
    <property type="match status" value="4"/>
</dbReference>
<dbReference type="InterPro" id="IPR003593">
    <property type="entry name" value="AAA+_ATPase"/>
</dbReference>
<dbReference type="InterPro" id="IPR043502">
    <property type="entry name" value="DNA/RNA_pol_sf"/>
</dbReference>
<dbReference type="InterPro" id="IPR000605">
    <property type="entry name" value="Helicase_SF3_ssDNA/RNA_vir"/>
</dbReference>
<dbReference type="InterPro" id="IPR014759">
    <property type="entry name" value="Helicase_SF3_ssRNA_vir"/>
</dbReference>
<dbReference type="InterPro" id="IPR027417">
    <property type="entry name" value="P-loop_NTPase"/>
</dbReference>
<dbReference type="InterPro" id="IPR014838">
    <property type="entry name" value="P3A"/>
</dbReference>
<dbReference type="InterPro" id="IPR036203">
    <property type="entry name" value="P3A_soluble_dom"/>
</dbReference>
<dbReference type="InterPro" id="IPR044067">
    <property type="entry name" value="PCV_3C_PRO"/>
</dbReference>
<dbReference type="InterPro" id="IPR000081">
    <property type="entry name" value="Peptidase_C3"/>
</dbReference>
<dbReference type="InterPro" id="IPR000199">
    <property type="entry name" value="Peptidase_C3A/C3B_picornavir"/>
</dbReference>
<dbReference type="InterPro" id="IPR009003">
    <property type="entry name" value="Peptidase_S1_PA"/>
</dbReference>
<dbReference type="InterPro" id="IPR043504">
    <property type="entry name" value="Peptidase_S1_PA_chymotrypsin"/>
</dbReference>
<dbReference type="InterPro" id="IPR003138">
    <property type="entry name" value="Pico_P1A"/>
</dbReference>
<dbReference type="InterPro" id="IPR036988">
    <property type="entry name" value="Pico_P1A_sf"/>
</dbReference>
<dbReference type="InterPro" id="IPR002527">
    <property type="entry name" value="Pico_P2B"/>
</dbReference>
<dbReference type="InterPro" id="IPR001676">
    <property type="entry name" value="Picornavirus_capsid"/>
</dbReference>
<dbReference type="InterPro" id="IPR043128">
    <property type="entry name" value="Rev_trsase/Diguanyl_cyclase"/>
</dbReference>
<dbReference type="InterPro" id="IPR033703">
    <property type="entry name" value="Rhv-like"/>
</dbReference>
<dbReference type="InterPro" id="IPR001205">
    <property type="entry name" value="RNA-dir_pol_C"/>
</dbReference>
<dbReference type="InterPro" id="IPR007094">
    <property type="entry name" value="RNA-dir_pol_PSvirus"/>
</dbReference>
<dbReference type="InterPro" id="IPR029053">
    <property type="entry name" value="Viral_coat"/>
</dbReference>
<dbReference type="Pfam" id="PF08727">
    <property type="entry name" value="P3A"/>
    <property type="match status" value="1"/>
</dbReference>
<dbReference type="Pfam" id="PF00548">
    <property type="entry name" value="Peptidase_C3"/>
    <property type="match status" value="1"/>
</dbReference>
<dbReference type="Pfam" id="PF02226">
    <property type="entry name" value="Pico_P1A"/>
    <property type="match status" value="1"/>
</dbReference>
<dbReference type="Pfam" id="PF00947">
    <property type="entry name" value="Pico_P2A"/>
    <property type="match status" value="1"/>
</dbReference>
<dbReference type="Pfam" id="PF01552">
    <property type="entry name" value="Pico_P2B"/>
    <property type="match status" value="1"/>
</dbReference>
<dbReference type="Pfam" id="PF00680">
    <property type="entry name" value="RdRP_1"/>
    <property type="match status" value="1"/>
</dbReference>
<dbReference type="Pfam" id="PF00073">
    <property type="entry name" value="Rhv"/>
    <property type="match status" value="2"/>
</dbReference>
<dbReference type="Pfam" id="PF22663">
    <property type="entry name" value="Rhv_5"/>
    <property type="match status" value="1"/>
</dbReference>
<dbReference type="Pfam" id="PF00910">
    <property type="entry name" value="RNA_helicase"/>
    <property type="match status" value="1"/>
</dbReference>
<dbReference type="SMART" id="SM00382">
    <property type="entry name" value="AAA"/>
    <property type="match status" value="1"/>
</dbReference>
<dbReference type="SUPFAM" id="SSF56672">
    <property type="entry name" value="DNA/RNA polymerases"/>
    <property type="match status" value="1"/>
</dbReference>
<dbReference type="SUPFAM" id="SSF52540">
    <property type="entry name" value="P-loop containing nucleoside triphosphate hydrolases"/>
    <property type="match status" value="1"/>
</dbReference>
<dbReference type="SUPFAM" id="SSF88633">
    <property type="entry name" value="Positive stranded ssRNA viruses"/>
    <property type="match status" value="2"/>
</dbReference>
<dbReference type="SUPFAM" id="SSF89043">
    <property type="entry name" value="Soluble domain of poliovirus core protein 3a"/>
    <property type="match status" value="1"/>
</dbReference>
<dbReference type="SUPFAM" id="SSF50494">
    <property type="entry name" value="Trypsin-like serine proteases"/>
    <property type="match status" value="2"/>
</dbReference>
<dbReference type="PROSITE" id="PS51874">
    <property type="entry name" value="PCV_3C_PRO"/>
    <property type="match status" value="1"/>
</dbReference>
<dbReference type="PROSITE" id="PS50507">
    <property type="entry name" value="RDRP_SSRNA_POS"/>
    <property type="match status" value="1"/>
</dbReference>
<dbReference type="PROSITE" id="PS51218">
    <property type="entry name" value="SF3_HELICASE_2"/>
    <property type="match status" value="1"/>
</dbReference>
<protein>
    <recommendedName>
        <fullName>Genome polyprotein</fullName>
    </recommendedName>
    <component>
        <recommendedName>
            <fullName>P1</fullName>
        </recommendedName>
    </component>
    <component>
        <recommendedName>
            <fullName>Capsid protein VP0</fullName>
        </recommendedName>
        <alternativeName>
            <fullName>VP4-VP2</fullName>
        </alternativeName>
    </component>
    <component>
        <recommendedName>
            <fullName>Capsid protein VP4</fullName>
        </recommendedName>
        <alternativeName>
            <fullName>P1A</fullName>
        </alternativeName>
        <alternativeName>
            <fullName>Virion protein 4</fullName>
        </alternativeName>
    </component>
    <component>
        <recommendedName>
            <fullName>Capsid protein VP2</fullName>
        </recommendedName>
        <alternativeName>
            <fullName>P1B</fullName>
        </alternativeName>
        <alternativeName>
            <fullName>Virion protein 2</fullName>
        </alternativeName>
    </component>
    <component>
        <recommendedName>
            <fullName>Capsid protein VP3</fullName>
        </recommendedName>
        <alternativeName>
            <fullName>P1C</fullName>
        </alternativeName>
        <alternativeName>
            <fullName>Virion protein 3</fullName>
        </alternativeName>
    </component>
    <component>
        <recommendedName>
            <fullName>Capsid protein VP1</fullName>
        </recommendedName>
        <alternativeName>
            <fullName>P1D</fullName>
        </alternativeName>
        <alternativeName>
            <fullName>Virion protein 1</fullName>
        </alternativeName>
    </component>
    <component>
        <recommendedName>
            <fullName>P2</fullName>
        </recommendedName>
    </component>
    <component>
        <recommendedName>
            <fullName>Protease 2A</fullName>
            <shortName>P2A</shortName>
            <ecNumber evidence="2">3.4.22.29</ecNumber>
        </recommendedName>
        <alternativeName>
            <fullName>Picornain 2A</fullName>
        </alternativeName>
        <alternativeName>
            <fullName>Protein 2A</fullName>
        </alternativeName>
    </component>
    <component>
        <recommendedName>
            <fullName>Protein 2B</fullName>
            <shortName>P2B</shortName>
        </recommendedName>
    </component>
    <component>
        <recommendedName>
            <fullName>Protein 2C</fullName>
            <shortName>P2C</shortName>
            <ecNumber evidence="2">3.6.1.15</ecNumber>
        </recommendedName>
    </component>
    <component>
        <recommendedName>
            <fullName>P3</fullName>
        </recommendedName>
    </component>
    <component>
        <recommendedName>
            <fullName>Protein 3AB</fullName>
        </recommendedName>
    </component>
    <component>
        <recommendedName>
            <fullName>Protein 3A</fullName>
            <shortName>P3A</shortName>
        </recommendedName>
    </component>
    <component>
        <recommendedName>
            <fullName>Viral protein genome-linked</fullName>
            <shortName>VPg</shortName>
        </recommendedName>
        <alternativeName>
            <fullName>Protein 3B</fullName>
            <shortName>P3B</shortName>
        </alternativeName>
    </component>
    <component>
        <recommendedName>
            <fullName>Protein 3CD</fullName>
            <ecNumber>3.4.22.28</ecNumber>
        </recommendedName>
    </component>
    <component>
        <recommendedName>
            <fullName evidence="12">Protease 3C</fullName>
            <ecNumber evidence="12">3.4.22.28</ecNumber>
        </recommendedName>
        <alternativeName>
            <fullName evidence="12">Picornain 3C</fullName>
            <shortName evidence="12">P3C</shortName>
        </alternativeName>
    </component>
    <component>
        <recommendedName>
            <fullName evidence="10">RNA-directed RNA polymerase</fullName>
            <shortName>RdRp</shortName>
            <ecNumber evidence="10">2.7.7.48</ecNumber>
        </recommendedName>
        <alternativeName>
            <fullName>3D polymerase</fullName>
            <shortName>3Dpol</shortName>
        </alternativeName>
        <alternativeName>
            <fullName>Protein 3D</fullName>
            <shortName>3D</shortName>
        </alternativeName>
    </component>
</protein>
<organism>
    <name type="scientific">Echovirus 30 (strain Bastianni)</name>
    <dbReference type="NCBI Taxonomy" id="176284"/>
    <lineage>
        <taxon>Viruses</taxon>
        <taxon>Riboviria</taxon>
        <taxon>Orthornavirae</taxon>
        <taxon>Pisuviricota</taxon>
        <taxon>Pisoniviricetes</taxon>
        <taxon>Picornavirales</taxon>
        <taxon>Picornaviridae</taxon>
        <taxon>Ensavirinae</taxon>
        <taxon>Enterovirus</taxon>
        <taxon>Enterovirus B</taxon>
    </lineage>
</organism>
<reference key="1">
    <citation type="submission" date="1999-06" db="EMBL/GenBank/DDBJ databases">
        <title>Complete genome of echovirus 30 strain Bastianni.</title>
        <authorList>
            <person name="Zell R."/>
        </authorList>
    </citation>
    <scope>NUCLEOTIDE SEQUENCE [GENOMIC RNA]</scope>
</reference>
<reference key="2">
    <citation type="journal article" date="2019" name="Proc. Natl. Acad. Sci. U.S.A.">
        <title>The neonatal Fc receptor is a pan-echovirus receptor.</title>
        <authorList>
            <person name="Morosky S."/>
            <person name="Wells A.I."/>
            <person name="Lemon K."/>
            <person name="Evans A.S."/>
            <person name="Schamus S."/>
            <person name="Bakkenist C.J."/>
            <person name="Coyne C.B."/>
        </authorList>
    </citation>
    <scope>FUNCTION (CAPSID PROTEIN VP1)</scope>
    <scope>INTERACTION WITH HOST FCGRT (CAPSID PROTEIN VP1)</scope>
</reference>
<keyword id="KW-1072">Activation of host autophagy by virus</keyword>
<keyword id="KW-0067">ATP-binding</keyword>
<keyword id="KW-0068">Autocatalytic cleavage</keyword>
<keyword id="KW-0167">Capsid protein</keyword>
<keyword id="KW-0191">Covalent protein-RNA linkage</keyword>
<keyword id="KW-0235">DNA replication</keyword>
<keyword id="KW-1262">Eukaryotic host gene expression shutoff by virus</keyword>
<keyword id="KW-1193">Eukaryotic host translation shutoff by virus</keyword>
<keyword id="KW-0347">Helicase</keyword>
<keyword id="KW-1035">Host cytoplasm</keyword>
<keyword id="KW-1036">Host cytoplasmic vesicle</keyword>
<keyword id="KW-1190">Host gene expression shutoff by virus</keyword>
<keyword id="KW-1043">Host membrane</keyword>
<keyword id="KW-1192">Host mRNA suppression by virus</keyword>
<keyword id="KW-1048">Host nucleus</keyword>
<keyword id="KW-0945">Host-virus interaction</keyword>
<keyword id="KW-0378">Hydrolase</keyword>
<keyword id="KW-1090">Inhibition of host innate immune response by virus</keyword>
<keyword id="KW-1099">Inhibition of host mRNA nuclear export by virus</keyword>
<keyword id="KW-1088">Inhibition of host RIG-I by virus</keyword>
<keyword id="KW-1113">Inhibition of host RLR pathway by virus</keyword>
<keyword id="KW-0407">Ion channel</keyword>
<keyword id="KW-0406">Ion transport</keyword>
<keyword id="KW-0449">Lipoprotein</keyword>
<keyword id="KW-0460">Magnesium</keyword>
<keyword id="KW-0472">Membrane</keyword>
<keyword id="KW-0479">Metal-binding</keyword>
<keyword id="KW-0519">Myristate</keyword>
<keyword id="KW-0547">Nucleotide-binding</keyword>
<keyword id="KW-0548">Nucleotidyltransferase</keyword>
<keyword id="KW-0597">Phosphoprotein</keyword>
<keyword id="KW-1172">Pore-mediated penetration of viral genome into host cell</keyword>
<keyword id="KW-0645">Protease</keyword>
<keyword id="KW-0677">Repeat</keyword>
<keyword id="KW-0694">RNA-binding</keyword>
<keyword id="KW-0696">RNA-directed RNA polymerase</keyword>
<keyword id="KW-1143">T=pseudo3 icosahedral capsid protein</keyword>
<keyword id="KW-0788">Thiol protease</keyword>
<keyword id="KW-0808">Transferase</keyword>
<keyword id="KW-0813">Transport</keyword>
<keyword id="KW-1161">Viral attachment to host cell</keyword>
<keyword id="KW-0899">Viral immunoevasion</keyword>
<keyword id="KW-1182">Viral ion channel</keyword>
<keyword id="KW-1162">Viral penetration into host cytoplasm</keyword>
<keyword id="KW-0693">Viral RNA replication</keyword>
<keyword id="KW-0946">Virion</keyword>
<keyword id="KW-1164">Virus endocytosis by host</keyword>
<keyword id="KW-1160">Virus entry into host cell</keyword>
<keyword id="KW-0862">Zinc</keyword>
<keyword id="KW-0863">Zinc-finger</keyword>
<comment type="function">
    <molecule>Capsid protein VP1</molecule>
    <text evidence="2">Forms an icosahedral capsid of pseudo T=3 symmetry with capsid proteins VP2 and VP3 (By similarity). The capsid is 300 Angstroms in diameter, composed of 60 copies of each capsid protein and enclosing the viral positive strand RNA genome (By similarity). Capsid protein VP1 mainly forms the vertices of the capsid (By similarity). Capsid protein VP1 interacts with host cell receptor to provide virion attachment to target host cells (By similarity). This attachment induces virion internalization (By similarity). Tyrosine kinases are probably involved in the entry process (By similarity). After binding to its receptor, the capsid undergoes conformational changes (By similarity). Capsid protein VP1 N-terminus (that contains an amphipathic alpha-helix) and capsid protein VP4 are externalized (By similarity). Together, they shape a pore in the host membrane through which viral genome is translocated to host cell cytoplasm (By similarity).</text>
</comment>
<comment type="function">
    <molecule>Capsid protein VP2</molecule>
    <text evidence="2">Forms an icosahedral capsid of pseudo T=3 symmetry with capsid proteins VP2 and VP3 (By similarity). The capsid is 300 Angstroms in diameter, composed of 60 copies of each capsid protein and enclosing the viral positive strand RNA genome (By similarity).</text>
</comment>
<comment type="function">
    <molecule>Capsid protein VP3</molecule>
    <text evidence="2">Forms an icosahedral capsid of pseudo T=3 symmetry with capsid proteins VP2 and VP3 (By similarity). The capsid is 300 Angstroms in diameter, composed of 60 copies of each capsid protein and enclosing the viral positive strand RNA genome (By similarity).</text>
</comment>
<comment type="function">
    <molecule>Capsid protein VP4</molecule>
    <text evidence="2">Lies on the inner surface of the capsid shell (By similarity). After binding to the host receptor, the capsid undergoes conformational changes (By similarity). Capsid protein VP4 is released, Capsid protein VP1 N-terminus is externalized, and together, they shape a pore in the host membrane through which the viral genome is translocated into the host cell cytoplasm (By similarity).</text>
</comment>
<comment type="function">
    <molecule>Capsid protein VP0</molecule>
    <text evidence="2">Component of immature procapsids, which is cleaved into capsid proteins VP4 and VP2 after maturation (By similarity). Allows the capsid to remain inactive before the maturation step (By similarity).</text>
</comment>
<comment type="function">
    <molecule>Protease 2A</molecule>
    <text evidence="2 3">Cysteine protease that cleaves viral polyprotein and specific host proteins (By similarity). It is responsible for the autocatalytic cleavage between the P1 and P2 regions, which is the first cleavage occurring in the polyprotein (By similarity). Also cleaves the host translation initiation factor EIF4G1, in order to shut down the capped cellular mRNA translation (By similarity). Inhibits the host nucleus-cytoplasm protein and RNA trafficking by cleaving host members of the nuclear pores (By similarity). Counteracts stress granule formation probably by antagonizing its assembly or promoting its dissassembly (By similarity).</text>
</comment>
<comment type="function">
    <molecule>Protein 2B</molecule>
    <text evidence="2">Plays an essential role in the virus replication cycle by acting as a viroporin. Creates a pore in the host endoplasmic reticulum and as a consequence releases Ca2+ in the cytoplasm of infected cell. In turn, high levels of cytoplasmic calcium may trigger membrane trafficking and transport of viral ER-associated proteins to viroplasms, sites of viral genome replication.</text>
</comment>
<comment type="function">
    <molecule>Protein 2C</molecule>
    <text evidence="2">Induces and associates with structural rearrangements of intracellular membranes. Displays RNA-binding, nucleotide binding and NTPase activities. May play a role in virion morphogenesis and viral RNA encapsidation by interacting with the capsid protein VP3.</text>
</comment>
<comment type="function">
    <molecule>Protein 3AB</molecule>
    <text evidence="2">Localizes the viral replication complex to the surface of membranous vesicles. Together with protein 3CD binds the Cis-Active RNA Element (CRE) which is involved in RNA synthesis initiation. Acts as a cofactor to stimulate the activity of 3D polymerase, maybe through a nucleid acid chaperone activity.</text>
</comment>
<comment type="function">
    <molecule>Protein 3A</molecule>
    <text evidence="2">Localizes the viral replication complex to the surface of membranous vesicles (By similarity). It inhibits host cell endoplasmic reticulum-to-Golgi apparatus transport and causes the disassembly of the Golgi complex, possibly through GBF1 interaction (By similarity). This would result in depletion of MHC, trail receptors and IFN receptors at the host cell surface (By similarity). Plays an essential role in viral RNA replication by recruiting ACBD3 and PI4KB at the viral replication sites, thereby allowing the formation of the rearranged membranous structures where viral replication takes place (By similarity).</text>
</comment>
<comment type="function">
    <molecule>Viral protein genome-linked</molecule>
    <text evidence="2">Acts as a primer for viral RNA replication and remains covalently bound to viral genomic RNA. VPg is uridylylated prior to priming replication into VPg-pUpU. The oriI viral genomic sequence may act as a template for this. The VPg-pUpU is then used as primer on the genomic RNA poly(A) by the RNA-dependent RNA polymerase to replicate the viral genome. During genome replication, the VPg-RNA linkage is removed by the host TDP2, thereby accelerating replication. During the late stage of the replication cycle, host TDP2 is excluded from sites of viral RNA synthesis and encapsidation, allowing for the generation of progeny virions.</text>
</comment>
<comment type="function">
    <molecule>Protein 3CD</molecule>
    <text evidence="2">Involved in the viral replication complex and viral polypeptide maturation. It exhibits protease activity with a specificity and catalytic efficiency that is different from protease 3C. Protein 3CD lacks polymerase activity. Protein 3CD binds to the 5'UTR of the viral genome.</text>
</comment>
<comment type="function">
    <molecule>RNA-directed RNA polymerase</molecule>
    <text evidence="2">Replicates the viral genomic RNA on the surface of intracellular membranes. May form linear arrays of subunits that propagate along a strong head-to-tail interaction called interface-I. Covalently attaches UMP to a tyrosine of VPg, which is used to prime RNA synthesis. The positive stranded RNA genome is first replicated at virus induced membranous vesicles, creating a dsRNA genomic replication form. This dsRNA is then used as template to synthesize positive stranded RNA genomes. ss(+)RNA genomes are either translated, replicated or encapsidated.</text>
</comment>
<comment type="function">
    <molecule>Protease 3C</molecule>
    <text evidence="2 4">Major viral protease that mediates proteolytic processing of the polyprotein (By similarity). Cleaves host EIF5B, contributing to host translation shutoff (By similarity). Also cleaves host PABPC1, contributing to host translation shutoff (By similarity). Cleaves host NLRP1, triggers host N-glycine-mediated degradation of the autoinhibitory NLRP1 N-terminal fragment (By similarity).</text>
</comment>
<comment type="catalytic activity">
    <molecule>Protein 2C</molecule>
    <reaction evidence="2">
        <text>a ribonucleoside 5'-triphosphate + H2O = a ribonucleoside 5'-diphosphate + phosphate + H(+)</text>
        <dbReference type="Rhea" id="RHEA:23680"/>
        <dbReference type="ChEBI" id="CHEBI:15377"/>
        <dbReference type="ChEBI" id="CHEBI:15378"/>
        <dbReference type="ChEBI" id="CHEBI:43474"/>
        <dbReference type="ChEBI" id="CHEBI:57930"/>
        <dbReference type="ChEBI" id="CHEBI:61557"/>
        <dbReference type="EC" id="3.6.1.15"/>
    </reaction>
</comment>
<comment type="catalytic activity">
    <molecule>Protease 2A</molecule>
    <reaction evidence="2">
        <text>Selective cleavage of Tyr-|-Gly bond in the picornavirus polyprotein.</text>
        <dbReference type="EC" id="3.4.22.29"/>
    </reaction>
</comment>
<comment type="catalytic activity">
    <molecule>RNA-directed RNA polymerase</molecule>
    <reaction evidence="10">
        <text>RNA(n) + a ribonucleoside 5'-triphosphate = RNA(n+1) + diphosphate</text>
        <dbReference type="Rhea" id="RHEA:21248"/>
        <dbReference type="Rhea" id="RHEA-COMP:14527"/>
        <dbReference type="Rhea" id="RHEA-COMP:17342"/>
        <dbReference type="ChEBI" id="CHEBI:33019"/>
        <dbReference type="ChEBI" id="CHEBI:61557"/>
        <dbReference type="ChEBI" id="CHEBI:140395"/>
        <dbReference type="EC" id="2.7.7.48"/>
    </reaction>
</comment>
<comment type="catalytic activity">
    <molecule>Protease 3C</molecule>
    <reaction evidence="12">
        <text>Selective cleavage of Gln-|-Gly bond in the poliovirus polyprotein. In other picornavirus reactions Glu may be substituted for Gln, and Ser or Thr for Gly.</text>
        <dbReference type="EC" id="3.4.22.28"/>
    </reaction>
</comment>
<comment type="cofactor">
    <molecule>RNA-directed RNA polymerase</molecule>
    <cofactor evidence="2">
        <name>Mg(2+)</name>
        <dbReference type="ChEBI" id="CHEBI:18420"/>
    </cofactor>
    <text evidence="2 5">Binds 2 magnesium ions that constitute a dinuclear catalytic metal center (By similarity). The magnesium ions are not prebound but only present for catalysis (By similarity). Requires the presence of 3CDpro or 3CPro (By similarity).</text>
</comment>
<comment type="activity regulation">
    <molecule>RNA-directed RNA polymerase</molecule>
    <text evidence="2">Replication or transcription is subject to high level of random mutations by the nucleotide analog ribavirin.</text>
</comment>
<comment type="subunit">
    <molecule>Capsid protein VP0</molecule>
    <text evidence="2">Interacts with capsid protein VP1 and capsid protein VP3 to form heterotrimeric protomers.</text>
</comment>
<comment type="subunit">
    <molecule>Capsid protein VP1</molecule>
    <text evidence="2">Interacts with capsid protein VP0, and capsid protein VP3 to form heterotrimeric protomers (By similarity). Five protomers subsequently associate to form pentamers which serve as building blocks for the capsid (By similarity). Interacts with capsid protein VP2, capsid protein VP3 and capsid protein VP4 following cleavage of capsid protein VP0 (By similarity).</text>
</comment>
<comment type="subunit">
    <molecule>Capsid protein VP2</molecule>
    <text evidence="2">Interacts with capsid protein VP1 and capsid protein VP3 in the mature capsid.</text>
</comment>
<comment type="subunit">
    <molecule>Capsid protein VP3</molecule>
    <text evidence="2">Interacts with capsid protein VP0 and capsid protein VP1 to form heterotrimeric protomers (By similarity). Five protomers subsequently associate to form pentamers which serve as building blocks for the capsid (By similarity). Interacts with capsid protein VP4 in the mature capsid (By similarity). Interacts with protein 2C; this interaction may be important for virion morphogenesis (By similarity).</text>
</comment>
<comment type="subunit">
    <molecule>Capsid protein VP4</molecule>
    <text evidence="2">Interacts with capsid protein VP1 and capsid protein VP3.</text>
</comment>
<comment type="subunit">
    <molecule>Protease 2A</molecule>
    <text evidence="6">Homodimer.</text>
</comment>
<comment type="subunit">
    <molecule>Protein 2C</molecule>
    <text evidence="2">Homohexamer; forms a hexameric ring structure with 6-fold symmetry characteristic of AAA+ ATPases (By similarity). Interacts (via N-terminus) with host RTN3 (via reticulon domain); this interaction is important for viral replication (By similarity). Interacts with capsid protein VP3; this interaction may be important for virion morphogenesis (By similarity).</text>
</comment>
<comment type="subunit">
    <molecule>Protein 3AB</molecule>
    <text evidence="2">Interacts with protein 3CD.</text>
</comment>
<comment type="subunit">
    <molecule>Protein 3A</molecule>
    <text evidence="2">Homodimer (By similarity). Interacts with host GBF1 (By similarity). Interacts (via GOLD domain) with host ACBD3 (via GOLD domain); this interaction allows the formation of a viral protein 3A/ACBD3 heterotetramer with a 2:2 stoichiometry, which will stimulate the recruitment of host PI4KB in order to synthesize PI4P at the viral RNA replication sites (By similarity).</text>
</comment>
<comment type="subunit">
    <molecule>Viral protein genome-linked</molecule>
    <text evidence="2">Interacts with RNA-directed RNA polymerase.</text>
</comment>
<comment type="subunit">
    <molecule>Protein 3CD</molecule>
    <text evidence="2">Interacts with protein 3AB and with RNA-directed RNA polymerase.</text>
</comment>
<comment type="subunit">
    <molecule>RNA-directed RNA polymerase</molecule>
    <text evidence="2">Interacts with Viral protein genome-linked and with protein 3CD.</text>
</comment>
<comment type="subcellular location">
    <molecule>Capsid protein VP0</molecule>
    <subcellularLocation>
        <location>Virion</location>
    </subcellularLocation>
    <subcellularLocation>
        <location evidence="13">Host cytoplasm</location>
    </subcellularLocation>
</comment>
<comment type="subcellular location">
    <molecule>Capsid protein VP4</molecule>
    <subcellularLocation>
        <location>Virion</location>
    </subcellularLocation>
</comment>
<comment type="subcellular location">
    <molecule>Capsid protein VP2</molecule>
    <subcellularLocation>
        <location evidence="2">Virion</location>
    </subcellularLocation>
    <subcellularLocation>
        <location evidence="13">Host cytoplasm</location>
    </subcellularLocation>
</comment>
<comment type="subcellular location">
    <molecule>Capsid protein VP3</molecule>
    <subcellularLocation>
        <location evidence="2">Virion</location>
    </subcellularLocation>
    <subcellularLocation>
        <location evidence="13">Host cytoplasm</location>
    </subcellularLocation>
</comment>
<comment type="subcellular location">
    <molecule>Capsid protein VP1</molecule>
    <subcellularLocation>
        <location evidence="2">Virion</location>
    </subcellularLocation>
    <subcellularLocation>
        <location evidence="13">Host cytoplasm</location>
    </subcellularLocation>
</comment>
<comment type="subcellular location">
    <molecule>Protein 2B</molecule>
    <subcellularLocation>
        <location evidence="13">Host cytoplasmic vesicle membrane</location>
        <topology evidence="13">Peripheral membrane protein</topology>
        <orientation evidence="13">Cytoplasmic side</orientation>
    </subcellularLocation>
    <text>Probably localizes to the surface of intracellular membrane vesicles that are induced after virus infection as the site for viral RNA replication. These vesicles are derived from the endoplasmic reticulum.</text>
</comment>
<comment type="subcellular location">
    <molecule>Protein 2C</molecule>
    <subcellularLocation>
        <location evidence="13">Host cytoplasmic vesicle membrane</location>
        <topology evidence="13">Peripheral membrane protein</topology>
        <orientation evidence="13">Cytoplasmic side</orientation>
    </subcellularLocation>
    <text>Probably localizes to the surface of intracellular membrane vesicles that are induced after virus infection as the site for viral RNA replication. These vesicles are derived from the endoplasmic reticulum.</text>
</comment>
<comment type="subcellular location">
    <molecule>Protein 3A</molecule>
    <subcellularLocation>
        <location evidence="13">Host cytoplasmic vesicle membrane</location>
        <topology evidence="13">Peripheral membrane protein</topology>
        <orientation evidence="13">Cytoplasmic side</orientation>
    </subcellularLocation>
    <text>Probably localizes to the surface of intracellular membrane vesicles that are induced after virus infection as the site for viral RNA replication. These vesicles are derived from the endoplasmic reticulum.</text>
</comment>
<comment type="subcellular location">
    <molecule>Protein 3AB</molecule>
    <subcellularLocation>
        <location evidence="13">Host cytoplasmic vesicle membrane</location>
        <topology evidence="13">Peripheral membrane protein</topology>
        <orientation evidence="13">Cytoplasmic side</orientation>
    </subcellularLocation>
    <text>Probably localizes to the surface of intracellular membrane vesicles that are induced after virus infection as the site for viral RNA replication. These vesicles are derived from the endoplasmic reticulum.</text>
</comment>
<comment type="subcellular location">
    <molecule>Viral protein genome-linked</molecule>
    <subcellularLocation>
        <location evidence="2">Virion</location>
    </subcellularLocation>
    <subcellularLocation>
        <location evidence="7">Host cytoplasm</location>
    </subcellularLocation>
</comment>
<comment type="subcellular location">
    <molecule>Protease 3C</molecule>
    <subcellularLocation>
        <location>Host cytoplasm</location>
    </subcellularLocation>
</comment>
<comment type="subcellular location">
    <molecule>Protein 3CD</molecule>
    <subcellularLocation>
        <location evidence="2">Host nucleus</location>
    </subcellularLocation>
    <subcellularLocation>
        <location evidence="2">Host cytoplasm</location>
    </subcellularLocation>
    <subcellularLocation>
        <location evidence="13">Host cytoplasmic vesicle membrane</location>
        <topology evidence="13">Peripheral membrane protein</topology>
        <orientation evidence="13">Cytoplasmic side</orientation>
    </subcellularLocation>
    <text>Probably localizes to the surface of intracellular membrane vesicles that are induced after virus infection as the site for viral RNA replication. These vesicles are derived from the endoplasmic reticulum.</text>
</comment>
<comment type="subcellular location">
    <molecule>RNA-directed RNA polymerase</molecule>
    <subcellularLocation>
        <location evidence="13">Host cytoplasmic vesicle membrane</location>
        <topology evidence="13">Peripheral membrane protein</topology>
        <orientation evidence="13">Cytoplasmic side</orientation>
    </subcellularLocation>
    <text>Probably localizes to the surface of intracellular membrane vesicles that are induced after virus infection as the site for viral RNA replication. These vesicles are derived from the endoplasmic reticulum.</text>
</comment>
<comment type="domain">
    <molecule>Protein 2C</molecule>
    <text evidence="1 2">The N-terminus has membrane-binding (By similarity). The N-terminus also displays RNA-binding properties (By similarity). The N-terminus is involved in oligomerization (By similarity). The central part contains an ATPase domain and a degenerate C4-type zinc-finger with only 3 cysteines (By similarity). The C-terminus is involved in RNA-binding (By similarity). The extreme C-terminus contains a region involved in oligomerization (By similarity).</text>
</comment>
<comment type="PTM">
    <molecule>Genome polyprotein</molecule>
    <text evidence="2">Specific enzymatic cleavages in vivo by the viral proteases yield processing intermediates and the mature proteins.</text>
</comment>
<comment type="PTM">
    <molecule>Capsid protein VP0</molecule>
    <text evidence="2">Myristoylation is required for the formation of pentamers during virus assembly. Further assembly of 12 pentamers and a molecule of genomic RNA generates the provirion.</text>
</comment>
<comment type="PTM">
    <molecule>Capsid protein VP0</molecule>
    <text evidence="2">During virion maturation, immature virions are rendered infectious following cleavage of VP0 into VP4 and VP2. This maturation seems to be an autocatalytic event triggered by the presence of RNA in the capsid and it is followed by a conformational change infectious virion.</text>
</comment>
<comment type="PTM">
    <molecule>Capsid protein VP4</molecule>
    <text evidence="2">Myristoylation is required during RNA encapsidation and formation of the mature virus particle.</text>
</comment>
<comment type="PTM">
    <molecule>Viral protein genome-linked</molecule>
    <text evidence="2">VPg is uridylylated by the polymerase into VPg-pUpU. This acts as a nucleotide-peptide primer for the genomic RNA replication.</text>
</comment>
<comment type="similarity">
    <text evidence="13">Belongs to the picornaviruses polyprotein family.</text>
</comment>
<name>POLG_EC30B</name>
<accession>Q9WN78</accession>